<gene>
    <name evidence="1" type="primary">ispE</name>
    <name type="ordered locus">PGN_1012</name>
</gene>
<reference key="1">
    <citation type="journal article" date="2008" name="DNA Res.">
        <title>Determination of the genome sequence of Porphyromonas gingivalis strain ATCC 33277 and genomic comparison with strain W83 revealed extensive genome rearrangements in P. gingivalis.</title>
        <authorList>
            <person name="Naito M."/>
            <person name="Hirakawa H."/>
            <person name="Yamashita A."/>
            <person name="Ohara N."/>
            <person name="Shoji M."/>
            <person name="Yukitake H."/>
            <person name="Nakayama K."/>
            <person name="Toh H."/>
            <person name="Yoshimura F."/>
            <person name="Kuhara S."/>
            <person name="Hattori M."/>
            <person name="Hayashi T."/>
            <person name="Nakayama K."/>
        </authorList>
    </citation>
    <scope>NUCLEOTIDE SEQUENCE [LARGE SCALE GENOMIC DNA]</scope>
    <source>
        <strain>ATCC 33277 / DSM 20709 / CIP 103683 / JCM 12257 / NCTC 11834 / 2561</strain>
    </source>
</reference>
<sequence length="274" mass="30232">MIVFPNAKINLGLQVVAKRADGYHNIETVFYPIPLTDALEIEVREDTCDRLSVHGIPIDAATEDNLVMKAILALRRKFDFPPLTIELIKHIPSGAGLGGGSSNASFMLKLVRDYFSLPIDDKELAAIALTIGADCPFFVGNRPVLATDLGQVFTPLPNFSLSGLHIAIVKPPIHINTAAAYKGLKHVGKRETMPDEIVYMPVDEWRGKLVNDFEESLFPEHPRLAELKEMLYRSGALYAAMSGSGSALFGLFREKPQLDKAAITDCFRWQSIIP</sequence>
<evidence type="ECO:0000255" key="1">
    <source>
        <dbReference type="HAMAP-Rule" id="MF_00061"/>
    </source>
</evidence>
<protein>
    <recommendedName>
        <fullName evidence="1">4-diphosphocytidyl-2-C-methyl-D-erythritol kinase</fullName>
        <shortName evidence="1">CMK</shortName>
        <ecNumber evidence="1">2.7.1.148</ecNumber>
    </recommendedName>
    <alternativeName>
        <fullName evidence="1">4-(cytidine-5'-diphospho)-2-C-methyl-D-erythritol kinase</fullName>
    </alternativeName>
</protein>
<feature type="chain" id="PRO_1000092103" description="4-diphosphocytidyl-2-C-methyl-D-erythritol kinase">
    <location>
        <begin position="1"/>
        <end position="274"/>
    </location>
</feature>
<feature type="active site" evidence="1">
    <location>
        <position position="8"/>
    </location>
</feature>
<feature type="active site" evidence="1">
    <location>
        <position position="134"/>
    </location>
</feature>
<feature type="binding site" evidence="1">
    <location>
        <begin position="92"/>
        <end position="102"/>
    </location>
    <ligand>
        <name>ATP</name>
        <dbReference type="ChEBI" id="CHEBI:30616"/>
    </ligand>
</feature>
<dbReference type="EC" id="2.7.1.148" evidence="1"/>
<dbReference type="EMBL" id="AP009380">
    <property type="protein sequence ID" value="BAG33531.1"/>
    <property type="molecule type" value="Genomic_DNA"/>
</dbReference>
<dbReference type="RefSeq" id="WP_012457956.1">
    <property type="nucleotide sequence ID" value="NC_010729.1"/>
</dbReference>
<dbReference type="SMR" id="B2RJI6"/>
<dbReference type="GeneID" id="29256222"/>
<dbReference type="KEGG" id="pgn:PGN_1012"/>
<dbReference type="eggNOG" id="COG1947">
    <property type="taxonomic scope" value="Bacteria"/>
</dbReference>
<dbReference type="HOGENOM" id="CLU_053057_1_1_10"/>
<dbReference type="OrthoDB" id="9809438at2"/>
<dbReference type="BioCyc" id="PGIN431947:G1G2V-1145-MONOMER"/>
<dbReference type="UniPathway" id="UPA00056">
    <property type="reaction ID" value="UER00094"/>
</dbReference>
<dbReference type="Proteomes" id="UP000008842">
    <property type="component" value="Chromosome"/>
</dbReference>
<dbReference type="GO" id="GO:0050515">
    <property type="term" value="F:4-(cytidine 5'-diphospho)-2-C-methyl-D-erythritol kinase activity"/>
    <property type="evidence" value="ECO:0007669"/>
    <property type="project" value="UniProtKB-UniRule"/>
</dbReference>
<dbReference type="GO" id="GO:0005524">
    <property type="term" value="F:ATP binding"/>
    <property type="evidence" value="ECO:0007669"/>
    <property type="project" value="UniProtKB-UniRule"/>
</dbReference>
<dbReference type="GO" id="GO:0019288">
    <property type="term" value="P:isopentenyl diphosphate biosynthetic process, methylerythritol 4-phosphate pathway"/>
    <property type="evidence" value="ECO:0007669"/>
    <property type="project" value="UniProtKB-UniRule"/>
</dbReference>
<dbReference type="GO" id="GO:0016114">
    <property type="term" value="P:terpenoid biosynthetic process"/>
    <property type="evidence" value="ECO:0007669"/>
    <property type="project" value="InterPro"/>
</dbReference>
<dbReference type="Gene3D" id="3.30.230.10">
    <property type="match status" value="1"/>
</dbReference>
<dbReference type="Gene3D" id="3.30.70.890">
    <property type="entry name" value="GHMP kinase, C-terminal domain"/>
    <property type="match status" value="1"/>
</dbReference>
<dbReference type="HAMAP" id="MF_00061">
    <property type="entry name" value="IspE"/>
    <property type="match status" value="1"/>
</dbReference>
<dbReference type="InterPro" id="IPR013750">
    <property type="entry name" value="GHMP_kinase_C_dom"/>
</dbReference>
<dbReference type="InterPro" id="IPR036554">
    <property type="entry name" value="GHMP_kinase_C_sf"/>
</dbReference>
<dbReference type="InterPro" id="IPR006204">
    <property type="entry name" value="GHMP_kinase_N_dom"/>
</dbReference>
<dbReference type="InterPro" id="IPR004424">
    <property type="entry name" value="IspE"/>
</dbReference>
<dbReference type="InterPro" id="IPR020568">
    <property type="entry name" value="Ribosomal_Su5_D2-typ_SF"/>
</dbReference>
<dbReference type="InterPro" id="IPR014721">
    <property type="entry name" value="Ribsml_uS5_D2-typ_fold_subgr"/>
</dbReference>
<dbReference type="NCBIfam" id="TIGR00154">
    <property type="entry name" value="ispE"/>
    <property type="match status" value="1"/>
</dbReference>
<dbReference type="PANTHER" id="PTHR43527">
    <property type="entry name" value="4-DIPHOSPHOCYTIDYL-2-C-METHYL-D-ERYTHRITOL KINASE, CHLOROPLASTIC"/>
    <property type="match status" value="1"/>
</dbReference>
<dbReference type="PANTHER" id="PTHR43527:SF2">
    <property type="entry name" value="4-DIPHOSPHOCYTIDYL-2-C-METHYL-D-ERYTHRITOL KINASE, CHLOROPLASTIC"/>
    <property type="match status" value="1"/>
</dbReference>
<dbReference type="Pfam" id="PF08544">
    <property type="entry name" value="GHMP_kinases_C"/>
    <property type="match status" value="1"/>
</dbReference>
<dbReference type="Pfam" id="PF00288">
    <property type="entry name" value="GHMP_kinases_N"/>
    <property type="match status" value="1"/>
</dbReference>
<dbReference type="PIRSF" id="PIRSF010376">
    <property type="entry name" value="IspE"/>
    <property type="match status" value="1"/>
</dbReference>
<dbReference type="SUPFAM" id="SSF55060">
    <property type="entry name" value="GHMP Kinase, C-terminal domain"/>
    <property type="match status" value="1"/>
</dbReference>
<dbReference type="SUPFAM" id="SSF54211">
    <property type="entry name" value="Ribosomal protein S5 domain 2-like"/>
    <property type="match status" value="1"/>
</dbReference>
<keyword id="KW-0067">ATP-binding</keyword>
<keyword id="KW-0414">Isoprene biosynthesis</keyword>
<keyword id="KW-0418">Kinase</keyword>
<keyword id="KW-0547">Nucleotide-binding</keyword>
<keyword id="KW-0808">Transferase</keyword>
<accession>B2RJI6</accession>
<comment type="function">
    <text evidence="1">Catalyzes the phosphorylation of the position 2 hydroxy group of 4-diphosphocytidyl-2C-methyl-D-erythritol.</text>
</comment>
<comment type="catalytic activity">
    <reaction evidence="1">
        <text>4-CDP-2-C-methyl-D-erythritol + ATP = 4-CDP-2-C-methyl-D-erythritol 2-phosphate + ADP + H(+)</text>
        <dbReference type="Rhea" id="RHEA:18437"/>
        <dbReference type="ChEBI" id="CHEBI:15378"/>
        <dbReference type="ChEBI" id="CHEBI:30616"/>
        <dbReference type="ChEBI" id="CHEBI:57823"/>
        <dbReference type="ChEBI" id="CHEBI:57919"/>
        <dbReference type="ChEBI" id="CHEBI:456216"/>
        <dbReference type="EC" id="2.7.1.148"/>
    </reaction>
</comment>
<comment type="pathway">
    <text evidence="1">Isoprenoid biosynthesis; isopentenyl diphosphate biosynthesis via DXP pathway; isopentenyl diphosphate from 1-deoxy-D-xylulose 5-phosphate: step 3/6.</text>
</comment>
<comment type="similarity">
    <text evidence="1">Belongs to the GHMP kinase family. IspE subfamily.</text>
</comment>
<proteinExistence type="inferred from homology"/>
<name>ISPE_PORG3</name>
<organism>
    <name type="scientific">Porphyromonas gingivalis (strain ATCC 33277 / DSM 20709 / CIP 103683 / JCM 12257 / NCTC 11834 / 2561)</name>
    <dbReference type="NCBI Taxonomy" id="431947"/>
    <lineage>
        <taxon>Bacteria</taxon>
        <taxon>Pseudomonadati</taxon>
        <taxon>Bacteroidota</taxon>
        <taxon>Bacteroidia</taxon>
        <taxon>Bacteroidales</taxon>
        <taxon>Porphyromonadaceae</taxon>
        <taxon>Porphyromonas</taxon>
    </lineage>
</organism>